<dbReference type="EC" id="3.4.23.36" evidence="1"/>
<dbReference type="EMBL" id="CP000605">
    <property type="protein sequence ID" value="ACD97586.1"/>
    <property type="molecule type" value="Genomic_DNA"/>
</dbReference>
<dbReference type="RefSeq" id="WP_007053323.1">
    <property type="nucleotide sequence ID" value="NZ_AABM02000069.1"/>
</dbReference>
<dbReference type="SMR" id="B3DQ87"/>
<dbReference type="GeneID" id="69578544"/>
<dbReference type="KEGG" id="blj:BLD_0140"/>
<dbReference type="HOGENOM" id="CLU_083252_2_3_11"/>
<dbReference type="UniPathway" id="UPA00665"/>
<dbReference type="Proteomes" id="UP000002419">
    <property type="component" value="Chromosome"/>
</dbReference>
<dbReference type="GO" id="GO:0005886">
    <property type="term" value="C:plasma membrane"/>
    <property type="evidence" value="ECO:0007669"/>
    <property type="project" value="UniProtKB-SubCell"/>
</dbReference>
<dbReference type="GO" id="GO:0004190">
    <property type="term" value="F:aspartic-type endopeptidase activity"/>
    <property type="evidence" value="ECO:0007669"/>
    <property type="project" value="UniProtKB-UniRule"/>
</dbReference>
<dbReference type="GO" id="GO:0006508">
    <property type="term" value="P:proteolysis"/>
    <property type="evidence" value="ECO:0007669"/>
    <property type="project" value="UniProtKB-KW"/>
</dbReference>
<dbReference type="HAMAP" id="MF_00161">
    <property type="entry name" value="LspA"/>
    <property type="match status" value="1"/>
</dbReference>
<dbReference type="InterPro" id="IPR001872">
    <property type="entry name" value="Peptidase_A8"/>
</dbReference>
<dbReference type="NCBIfam" id="TIGR00077">
    <property type="entry name" value="lspA"/>
    <property type="match status" value="1"/>
</dbReference>
<dbReference type="NCBIfam" id="NF011353">
    <property type="entry name" value="PRK14771.1"/>
    <property type="match status" value="1"/>
</dbReference>
<dbReference type="PANTHER" id="PTHR33695">
    <property type="entry name" value="LIPOPROTEIN SIGNAL PEPTIDASE"/>
    <property type="match status" value="1"/>
</dbReference>
<dbReference type="PANTHER" id="PTHR33695:SF1">
    <property type="entry name" value="LIPOPROTEIN SIGNAL PEPTIDASE"/>
    <property type="match status" value="1"/>
</dbReference>
<dbReference type="Pfam" id="PF01252">
    <property type="entry name" value="Peptidase_A8"/>
    <property type="match status" value="1"/>
</dbReference>
<dbReference type="PRINTS" id="PR00781">
    <property type="entry name" value="LIPOSIGPTASE"/>
</dbReference>
<evidence type="ECO:0000255" key="1">
    <source>
        <dbReference type="HAMAP-Rule" id="MF_00161"/>
    </source>
</evidence>
<reference key="1">
    <citation type="journal article" date="2008" name="BMC Genomics">
        <title>Comparative genomic analysis of the gut bacterium Bifidobacterium longum reveals loci susceptible to deletion during pure culture growth.</title>
        <authorList>
            <person name="Lee J.H."/>
            <person name="Karamychev V.N."/>
            <person name="Kozyavkin S.A."/>
            <person name="Mills D."/>
            <person name="Pavlov A.R."/>
            <person name="Pavlova N.V."/>
            <person name="Polouchine N.N."/>
            <person name="Richardson P.M."/>
            <person name="Shakhova V.V."/>
            <person name="Slesarev A.I."/>
            <person name="Weimer B."/>
            <person name="O'Sullivan D.J."/>
        </authorList>
    </citation>
    <scope>NUCLEOTIDE SEQUENCE [LARGE SCALE GENOMIC DNA]</scope>
    <source>
        <strain>DJO10A</strain>
    </source>
</reference>
<feature type="chain" id="PRO_1000097230" description="Lipoprotein signal peptidase">
    <location>
        <begin position="1"/>
        <end position="182"/>
    </location>
</feature>
<feature type="transmembrane region" description="Helical" evidence="1">
    <location>
        <begin position="12"/>
        <end position="32"/>
    </location>
</feature>
<feature type="transmembrane region" description="Helical" evidence="1">
    <location>
        <begin position="68"/>
        <end position="88"/>
    </location>
</feature>
<feature type="transmembrane region" description="Helical" evidence="1">
    <location>
        <begin position="91"/>
        <end position="111"/>
    </location>
</feature>
<feature type="transmembrane region" description="Helical" evidence="1">
    <location>
        <begin position="135"/>
        <end position="155"/>
    </location>
</feature>
<feature type="active site" evidence="1">
    <location>
        <position position="127"/>
    </location>
</feature>
<feature type="active site" evidence="1">
    <location>
        <position position="140"/>
    </location>
</feature>
<proteinExistence type="inferred from homology"/>
<sequence length="182" mass="19158">MTNQQGRLRTRVAVFACVAAAALIVDQLTKAWAMAALSNGQTIRVIPGLLSFTLVRNPGASLGMGSGATWVISLLAVVACVALAVAGVRTVSMKWSVAISFAFAGALGNLIDRVMYADGFLDGKVVDFLNYGWSVGNVADIYLVVAGVVLVILILMGEPFSHKDLIEQSDESLQSEPEADAK</sequence>
<name>LSPA_BIFLD</name>
<keyword id="KW-0064">Aspartyl protease</keyword>
<keyword id="KW-1003">Cell membrane</keyword>
<keyword id="KW-0378">Hydrolase</keyword>
<keyword id="KW-0472">Membrane</keyword>
<keyword id="KW-0645">Protease</keyword>
<keyword id="KW-0812">Transmembrane</keyword>
<keyword id="KW-1133">Transmembrane helix</keyword>
<protein>
    <recommendedName>
        <fullName evidence="1">Lipoprotein signal peptidase</fullName>
        <ecNumber evidence="1">3.4.23.36</ecNumber>
    </recommendedName>
    <alternativeName>
        <fullName evidence="1">Prolipoprotein signal peptidase</fullName>
    </alternativeName>
    <alternativeName>
        <fullName evidence="1">Signal peptidase II</fullName>
        <shortName evidence="1">SPase II</shortName>
    </alternativeName>
</protein>
<gene>
    <name evidence="1" type="primary">lspA</name>
    <name type="ordered locus">BLD_0140</name>
</gene>
<accession>B3DQ87</accession>
<comment type="function">
    <text evidence="1">This protein specifically catalyzes the removal of signal peptides from prolipoproteins.</text>
</comment>
<comment type="catalytic activity">
    <reaction evidence="1">
        <text>Release of signal peptides from bacterial membrane prolipoproteins. Hydrolyzes -Xaa-Yaa-Zaa-|-(S,diacylglyceryl)Cys-, in which Xaa is hydrophobic (preferably Leu), and Yaa (Ala or Ser) and Zaa (Gly or Ala) have small, neutral side chains.</text>
        <dbReference type="EC" id="3.4.23.36"/>
    </reaction>
</comment>
<comment type="pathway">
    <text evidence="1">Protein modification; lipoprotein biosynthesis (signal peptide cleavage).</text>
</comment>
<comment type="subcellular location">
    <subcellularLocation>
        <location evidence="1">Cell membrane</location>
        <topology evidence="1">Multi-pass membrane protein</topology>
    </subcellularLocation>
</comment>
<comment type="similarity">
    <text evidence="1">Belongs to the peptidase A8 family.</text>
</comment>
<organism>
    <name type="scientific">Bifidobacterium longum (strain DJO10A)</name>
    <dbReference type="NCBI Taxonomy" id="205913"/>
    <lineage>
        <taxon>Bacteria</taxon>
        <taxon>Bacillati</taxon>
        <taxon>Actinomycetota</taxon>
        <taxon>Actinomycetes</taxon>
        <taxon>Bifidobacteriales</taxon>
        <taxon>Bifidobacteriaceae</taxon>
        <taxon>Bifidobacterium</taxon>
    </lineage>
</organism>